<sequence length="82" mass="9347">MAVKERVGVVVSDKMDKTVVVAIEDRTAHPKYGKIVVRTKRYKAHDEDNRAKTGDRVRIQETRPLSRTKRWTVAEILESVGA</sequence>
<organism>
    <name type="scientific">Synechococcus elongatus (strain ATCC 33912 / PCC 7942 / FACHB-805)</name>
    <name type="common">Anacystis nidulans R2</name>
    <dbReference type="NCBI Taxonomy" id="1140"/>
    <lineage>
        <taxon>Bacteria</taxon>
        <taxon>Bacillati</taxon>
        <taxon>Cyanobacteriota</taxon>
        <taxon>Cyanophyceae</taxon>
        <taxon>Synechococcales</taxon>
        <taxon>Synechococcaceae</taxon>
        <taxon>Synechococcus</taxon>
    </lineage>
</organism>
<gene>
    <name evidence="1" type="primary">rpsQ</name>
    <name evidence="1" type="synonym">rps17</name>
    <name type="ordered locus">Synpcc7942_2223</name>
</gene>
<proteinExistence type="inferred from homology"/>
<name>RS17_SYNE7</name>
<dbReference type="EMBL" id="CP000100">
    <property type="protein sequence ID" value="ABB58253.1"/>
    <property type="molecule type" value="Genomic_DNA"/>
</dbReference>
<dbReference type="RefSeq" id="WP_011244184.1">
    <property type="nucleotide sequence ID" value="NZ_JACJTX010000001.1"/>
</dbReference>
<dbReference type="SMR" id="Q31L16"/>
<dbReference type="STRING" id="1140.Synpcc7942_2223"/>
<dbReference type="PaxDb" id="1140-Synpcc7942_2223"/>
<dbReference type="GeneID" id="72431106"/>
<dbReference type="KEGG" id="syf:Synpcc7942_2223"/>
<dbReference type="eggNOG" id="COG0186">
    <property type="taxonomic scope" value="Bacteria"/>
</dbReference>
<dbReference type="HOGENOM" id="CLU_073626_1_2_3"/>
<dbReference type="OrthoDB" id="9811714at2"/>
<dbReference type="BioCyc" id="SYNEL:SYNPCC7942_2223-MONOMER"/>
<dbReference type="Proteomes" id="UP000889800">
    <property type="component" value="Chromosome"/>
</dbReference>
<dbReference type="GO" id="GO:0022627">
    <property type="term" value="C:cytosolic small ribosomal subunit"/>
    <property type="evidence" value="ECO:0007669"/>
    <property type="project" value="TreeGrafter"/>
</dbReference>
<dbReference type="GO" id="GO:0019843">
    <property type="term" value="F:rRNA binding"/>
    <property type="evidence" value="ECO:0007669"/>
    <property type="project" value="UniProtKB-UniRule"/>
</dbReference>
<dbReference type="GO" id="GO:0003735">
    <property type="term" value="F:structural constituent of ribosome"/>
    <property type="evidence" value="ECO:0007669"/>
    <property type="project" value="InterPro"/>
</dbReference>
<dbReference type="GO" id="GO:0006412">
    <property type="term" value="P:translation"/>
    <property type="evidence" value="ECO:0007669"/>
    <property type="project" value="UniProtKB-UniRule"/>
</dbReference>
<dbReference type="CDD" id="cd00364">
    <property type="entry name" value="Ribosomal_uS17"/>
    <property type="match status" value="1"/>
</dbReference>
<dbReference type="Gene3D" id="2.40.50.140">
    <property type="entry name" value="Nucleic acid-binding proteins"/>
    <property type="match status" value="1"/>
</dbReference>
<dbReference type="HAMAP" id="MF_01345_B">
    <property type="entry name" value="Ribosomal_uS17_B"/>
    <property type="match status" value="1"/>
</dbReference>
<dbReference type="InterPro" id="IPR012340">
    <property type="entry name" value="NA-bd_OB-fold"/>
</dbReference>
<dbReference type="InterPro" id="IPR000266">
    <property type="entry name" value="Ribosomal_uS17"/>
</dbReference>
<dbReference type="InterPro" id="IPR019984">
    <property type="entry name" value="Ribosomal_uS17_bact/chlr"/>
</dbReference>
<dbReference type="InterPro" id="IPR019979">
    <property type="entry name" value="Ribosomal_uS17_CS"/>
</dbReference>
<dbReference type="NCBIfam" id="NF004123">
    <property type="entry name" value="PRK05610.1"/>
    <property type="match status" value="1"/>
</dbReference>
<dbReference type="NCBIfam" id="TIGR03635">
    <property type="entry name" value="uS17_bact"/>
    <property type="match status" value="1"/>
</dbReference>
<dbReference type="PANTHER" id="PTHR10744">
    <property type="entry name" value="40S RIBOSOMAL PROTEIN S11 FAMILY MEMBER"/>
    <property type="match status" value="1"/>
</dbReference>
<dbReference type="PANTHER" id="PTHR10744:SF1">
    <property type="entry name" value="SMALL RIBOSOMAL SUBUNIT PROTEIN US17M"/>
    <property type="match status" value="1"/>
</dbReference>
<dbReference type="Pfam" id="PF00366">
    <property type="entry name" value="Ribosomal_S17"/>
    <property type="match status" value="1"/>
</dbReference>
<dbReference type="PRINTS" id="PR00973">
    <property type="entry name" value="RIBOSOMALS17"/>
</dbReference>
<dbReference type="SUPFAM" id="SSF50249">
    <property type="entry name" value="Nucleic acid-binding proteins"/>
    <property type="match status" value="1"/>
</dbReference>
<dbReference type="PROSITE" id="PS00056">
    <property type="entry name" value="RIBOSOMAL_S17"/>
    <property type="match status" value="1"/>
</dbReference>
<evidence type="ECO:0000255" key="1">
    <source>
        <dbReference type="HAMAP-Rule" id="MF_01345"/>
    </source>
</evidence>
<evidence type="ECO:0000305" key="2"/>
<reference key="1">
    <citation type="submission" date="2005-08" db="EMBL/GenBank/DDBJ databases">
        <title>Complete sequence of chromosome 1 of Synechococcus elongatus PCC 7942.</title>
        <authorList>
            <consortium name="US DOE Joint Genome Institute"/>
            <person name="Copeland A."/>
            <person name="Lucas S."/>
            <person name="Lapidus A."/>
            <person name="Barry K."/>
            <person name="Detter J.C."/>
            <person name="Glavina T."/>
            <person name="Hammon N."/>
            <person name="Israni S."/>
            <person name="Pitluck S."/>
            <person name="Schmutz J."/>
            <person name="Larimer F."/>
            <person name="Land M."/>
            <person name="Kyrpides N."/>
            <person name="Lykidis A."/>
            <person name="Golden S."/>
            <person name="Richardson P."/>
        </authorList>
    </citation>
    <scope>NUCLEOTIDE SEQUENCE [LARGE SCALE GENOMIC DNA]</scope>
    <source>
        <strain>ATCC 33912 / PCC 7942 / FACHB-805</strain>
    </source>
</reference>
<feature type="chain" id="PRO_0000233591" description="Small ribosomal subunit protein uS17">
    <location>
        <begin position="1"/>
        <end position="82"/>
    </location>
</feature>
<accession>Q31L16</accession>
<keyword id="KW-1185">Reference proteome</keyword>
<keyword id="KW-0687">Ribonucleoprotein</keyword>
<keyword id="KW-0689">Ribosomal protein</keyword>
<keyword id="KW-0694">RNA-binding</keyword>
<keyword id="KW-0699">rRNA-binding</keyword>
<protein>
    <recommendedName>
        <fullName evidence="1">Small ribosomal subunit protein uS17</fullName>
    </recommendedName>
    <alternativeName>
        <fullName evidence="2">30S ribosomal protein S17</fullName>
    </alternativeName>
</protein>
<comment type="function">
    <text evidence="1">One of the primary rRNA binding proteins, it binds specifically to the 5'-end of 16S ribosomal RNA.</text>
</comment>
<comment type="subunit">
    <text evidence="1">Part of the 30S ribosomal subunit.</text>
</comment>
<comment type="similarity">
    <text evidence="1">Belongs to the universal ribosomal protein uS17 family.</text>
</comment>